<dbReference type="EMBL" id="AY187007">
    <property type="protein sequence ID" value="AAO26358.1"/>
    <property type="molecule type" value="Genomic_DNA"/>
</dbReference>
<dbReference type="SMR" id="Q85PK7"/>
<dbReference type="GO" id="GO:0005743">
    <property type="term" value="C:mitochondrial inner membrane"/>
    <property type="evidence" value="ECO:0007669"/>
    <property type="project" value="UniProtKB-SubCell"/>
</dbReference>
<dbReference type="GO" id="GO:0045275">
    <property type="term" value="C:respiratory chain complex III"/>
    <property type="evidence" value="ECO:0007669"/>
    <property type="project" value="InterPro"/>
</dbReference>
<dbReference type="GO" id="GO:0046872">
    <property type="term" value="F:metal ion binding"/>
    <property type="evidence" value="ECO:0007669"/>
    <property type="project" value="UniProtKB-KW"/>
</dbReference>
<dbReference type="GO" id="GO:0008121">
    <property type="term" value="F:ubiquinol-cytochrome-c reductase activity"/>
    <property type="evidence" value="ECO:0007669"/>
    <property type="project" value="InterPro"/>
</dbReference>
<dbReference type="GO" id="GO:0006122">
    <property type="term" value="P:mitochondrial electron transport, ubiquinol to cytochrome c"/>
    <property type="evidence" value="ECO:0007669"/>
    <property type="project" value="TreeGrafter"/>
</dbReference>
<dbReference type="CDD" id="cd00290">
    <property type="entry name" value="cytochrome_b_C"/>
    <property type="match status" value="1"/>
</dbReference>
<dbReference type="CDD" id="cd00284">
    <property type="entry name" value="Cytochrome_b_N"/>
    <property type="match status" value="1"/>
</dbReference>
<dbReference type="FunFam" id="1.20.810.10:FF:000002">
    <property type="entry name" value="Cytochrome b"/>
    <property type="match status" value="1"/>
</dbReference>
<dbReference type="Gene3D" id="1.20.810.10">
    <property type="entry name" value="Cytochrome Bc1 Complex, Chain C"/>
    <property type="match status" value="1"/>
</dbReference>
<dbReference type="InterPro" id="IPR005798">
    <property type="entry name" value="Cyt_b/b6_C"/>
</dbReference>
<dbReference type="InterPro" id="IPR036150">
    <property type="entry name" value="Cyt_b/b6_C_sf"/>
</dbReference>
<dbReference type="InterPro" id="IPR005797">
    <property type="entry name" value="Cyt_b/b6_N"/>
</dbReference>
<dbReference type="InterPro" id="IPR027387">
    <property type="entry name" value="Cytb/b6-like_sf"/>
</dbReference>
<dbReference type="InterPro" id="IPR030689">
    <property type="entry name" value="Cytochrome_b"/>
</dbReference>
<dbReference type="InterPro" id="IPR048260">
    <property type="entry name" value="Cytochrome_b_C_euk/bac"/>
</dbReference>
<dbReference type="InterPro" id="IPR048259">
    <property type="entry name" value="Cytochrome_b_N_euk/bac"/>
</dbReference>
<dbReference type="InterPro" id="IPR016174">
    <property type="entry name" value="Di-haem_cyt_TM"/>
</dbReference>
<dbReference type="PANTHER" id="PTHR19271">
    <property type="entry name" value="CYTOCHROME B"/>
    <property type="match status" value="1"/>
</dbReference>
<dbReference type="PANTHER" id="PTHR19271:SF16">
    <property type="entry name" value="CYTOCHROME B"/>
    <property type="match status" value="1"/>
</dbReference>
<dbReference type="Pfam" id="PF00032">
    <property type="entry name" value="Cytochrom_B_C"/>
    <property type="match status" value="1"/>
</dbReference>
<dbReference type="Pfam" id="PF00033">
    <property type="entry name" value="Cytochrome_B"/>
    <property type="match status" value="1"/>
</dbReference>
<dbReference type="PIRSF" id="PIRSF038885">
    <property type="entry name" value="COB"/>
    <property type="match status" value="1"/>
</dbReference>
<dbReference type="SUPFAM" id="SSF81648">
    <property type="entry name" value="a domain/subunit of cytochrome bc1 complex (Ubiquinol-cytochrome c reductase)"/>
    <property type="match status" value="1"/>
</dbReference>
<dbReference type="SUPFAM" id="SSF81342">
    <property type="entry name" value="Transmembrane di-heme cytochromes"/>
    <property type="match status" value="1"/>
</dbReference>
<dbReference type="PROSITE" id="PS51003">
    <property type="entry name" value="CYTB_CTER"/>
    <property type="match status" value="1"/>
</dbReference>
<dbReference type="PROSITE" id="PS51002">
    <property type="entry name" value="CYTB_NTER"/>
    <property type="match status" value="1"/>
</dbReference>
<sequence length="379" mass="42735">MTNIRKSHPLIKIINESFIDLPAPSNISAWWNFGSLLGVCLILQILTGLFLAMHYTSDTATAFSSVTHICRDVNYGWIIRYMHANGASMFFICLFMHIGRGMYYGSYTFSETWNIGILLLFTVMATAFMGYVLPWGQMSFWGATVITNLLSAIPYIGTNLVEWIWGGFSVDKATLTRFFAFHFILPFIIAALAAVHLLFLHETGSNNPSGLTSNSDKIPFHPYYTIKDILGLLLLIMALMLLVLFSPDLLGDPDNYTPANPLNTPPHIKPEWYFLFAYAILRSIPNKLGGVVALVLSILILAVMPLLHTSKQRSMMFRPLSQCLFWLLVADLLTLTWIGGQPVEHPFITIGQLASILYFFTILVLMPISSMIENRFLKW</sequence>
<comment type="function">
    <text evidence="2">Component of the ubiquinol-cytochrome c reductase complex (complex III or cytochrome b-c1 complex) that is part of the mitochondrial respiratory chain. The b-c1 complex mediates electron transfer from ubiquinol to cytochrome c. Contributes to the generation of a proton gradient across the mitochondrial membrane that is then used for ATP synthesis.</text>
</comment>
<comment type="cofactor">
    <cofactor evidence="2">
        <name>heme b</name>
        <dbReference type="ChEBI" id="CHEBI:60344"/>
    </cofactor>
    <text evidence="2">Binds 2 heme b groups non-covalently.</text>
</comment>
<comment type="subunit">
    <text evidence="2">The cytochrome bc1 complex contains 11 subunits: 3 respiratory subunits (MT-CYB, CYC1 and UQCRFS1), 2 core proteins (UQCRC1 and UQCRC2) and 6 low-molecular weight proteins (UQCRH/QCR6, UQCRB/QCR7, UQCRQ/QCR8, UQCR10/QCR9, UQCR11/QCR10 and a cleavage product of UQCRFS1). This cytochrome bc1 complex then forms a dimer.</text>
</comment>
<comment type="subcellular location">
    <subcellularLocation>
        <location evidence="2">Mitochondrion inner membrane</location>
        <topology evidence="2">Multi-pass membrane protein</topology>
    </subcellularLocation>
</comment>
<comment type="miscellaneous">
    <text evidence="1">Heme 1 (or BL or b562) is low-potential and absorbs at about 562 nm, and heme 2 (or BH or b566) is high-potential and absorbs at about 566 nm.</text>
</comment>
<comment type="similarity">
    <text evidence="3 4">Belongs to the cytochrome b family.</text>
</comment>
<comment type="caution">
    <text evidence="2">The full-length protein contains only eight transmembrane helices, not nine as predicted by bioinformatics tools.</text>
</comment>
<keyword id="KW-0249">Electron transport</keyword>
<keyword id="KW-0349">Heme</keyword>
<keyword id="KW-0408">Iron</keyword>
<keyword id="KW-0472">Membrane</keyword>
<keyword id="KW-0479">Metal-binding</keyword>
<keyword id="KW-0496">Mitochondrion</keyword>
<keyword id="KW-0999">Mitochondrion inner membrane</keyword>
<keyword id="KW-0679">Respiratory chain</keyword>
<keyword id="KW-0812">Transmembrane</keyword>
<keyword id="KW-1133">Transmembrane helix</keyword>
<keyword id="KW-0813">Transport</keyword>
<keyword id="KW-0830">Ubiquinone</keyword>
<gene>
    <name type="primary">MT-CYB</name>
    <name type="synonym">COB</name>
    <name type="synonym">CYTB</name>
    <name type="synonym">MTCYB</name>
</gene>
<accession>Q85PK7</accession>
<organism>
    <name type="scientific">Salanoia concolor</name>
    <name type="common">Malagasy brown-tailed mongoose</name>
    <dbReference type="NCBI Taxonomy" id="219105"/>
    <lineage>
        <taxon>Eukaryota</taxon>
        <taxon>Metazoa</taxon>
        <taxon>Chordata</taxon>
        <taxon>Craniata</taxon>
        <taxon>Vertebrata</taxon>
        <taxon>Euteleostomi</taxon>
        <taxon>Mammalia</taxon>
        <taxon>Eutheria</taxon>
        <taxon>Laurasiatheria</taxon>
        <taxon>Carnivora</taxon>
        <taxon>Feliformia</taxon>
        <taxon>Eupleridae</taxon>
        <taxon>Galidiinae</taxon>
        <taxon>Salanoia</taxon>
    </lineage>
</organism>
<protein>
    <recommendedName>
        <fullName>Cytochrome b</fullName>
    </recommendedName>
    <alternativeName>
        <fullName>Complex III subunit 3</fullName>
    </alternativeName>
    <alternativeName>
        <fullName>Complex III subunit III</fullName>
    </alternativeName>
    <alternativeName>
        <fullName>Cytochrome b-c1 complex subunit 3</fullName>
    </alternativeName>
    <alternativeName>
        <fullName>Ubiquinol-cytochrome-c reductase complex cytochrome b subunit</fullName>
    </alternativeName>
</protein>
<name>CYB_SALCN</name>
<feature type="chain" id="PRO_0000061513" description="Cytochrome b">
    <location>
        <begin position="1"/>
        <end position="379"/>
    </location>
</feature>
<feature type="transmembrane region" description="Helical" evidence="2">
    <location>
        <begin position="33"/>
        <end position="53"/>
    </location>
</feature>
<feature type="transmembrane region" description="Helical" evidence="2">
    <location>
        <begin position="77"/>
        <end position="98"/>
    </location>
</feature>
<feature type="transmembrane region" description="Helical" evidence="2">
    <location>
        <begin position="113"/>
        <end position="133"/>
    </location>
</feature>
<feature type="transmembrane region" description="Helical" evidence="2">
    <location>
        <begin position="178"/>
        <end position="198"/>
    </location>
</feature>
<feature type="transmembrane region" description="Helical" evidence="2">
    <location>
        <begin position="226"/>
        <end position="246"/>
    </location>
</feature>
<feature type="transmembrane region" description="Helical" evidence="2">
    <location>
        <begin position="288"/>
        <end position="308"/>
    </location>
</feature>
<feature type="transmembrane region" description="Helical" evidence="2">
    <location>
        <begin position="320"/>
        <end position="340"/>
    </location>
</feature>
<feature type="transmembrane region" description="Helical" evidence="2">
    <location>
        <begin position="347"/>
        <end position="367"/>
    </location>
</feature>
<feature type="binding site" description="axial binding residue" evidence="2">
    <location>
        <position position="83"/>
    </location>
    <ligand>
        <name>heme b</name>
        <dbReference type="ChEBI" id="CHEBI:60344"/>
        <label>b562</label>
    </ligand>
    <ligandPart>
        <name>Fe</name>
        <dbReference type="ChEBI" id="CHEBI:18248"/>
    </ligandPart>
</feature>
<feature type="binding site" description="axial binding residue" evidence="2">
    <location>
        <position position="97"/>
    </location>
    <ligand>
        <name>heme b</name>
        <dbReference type="ChEBI" id="CHEBI:60344"/>
        <label>b566</label>
    </ligand>
    <ligandPart>
        <name>Fe</name>
        <dbReference type="ChEBI" id="CHEBI:18248"/>
    </ligandPart>
</feature>
<feature type="binding site" description="axial binding residue" evidence="2">
    <location>
        <position position="182"/>
    </location>
    <ligand>
        <name>heme b</name>
        <dbReference type="ChEBI" id="CHEBI:60344"/>
        <label>b562</label>
    </ligand>
    <ligandPart>
        <name>Fe</name>
        <dbReference type="ChEBI" id="CHEBI:18248"/>
    </ligandPart>
</feature>
<feature type="binding site" description="axial binding residue" evidence="2">
    <location>
        <position position="196"/>
    </location>
    <ligand>
        <name>heme b</name>
        <dbReference type="ChEBI" id="CHEBI:60344"/>
        <label>b566</label>
    </ligand>
    <ligandPart>
        <name>Fe</name>
        <dbReference type="ChEBI" id="CHEBI:18248"/>
    </ligandPart>
</feature>
<feature type="binding site" evidence="2">
    <location>
        <position position="201"/>
    </location>
    <ligand>
        <name>a ubiquinone</name>
        <dbReference type="ChEBI" id="CHEBI:16389"/>
    </ligand>
</feature>
<evidence type="ECO:0000250" key="1"/>
<evidence type="ECO:0000250" key="2">
    <source>
        <dbReference type="UniProtKB" id="P00157"/>
    </source>
</evidence>
<evidence type="ECO:0000255" key="3">
    <source>
        <dbReference type="PROSITE-ProRule" id="PRU00967"/>
    </source>
</evidence>
<evidence type="ECO:0000255" key="4">
    <source>
        <dbReference type="PROSITE-ProRule" id="PRU00968"/>
    </source>
</evidence>
<reference key="1">
    <citation type="journal article" date="2003" name="Nature">
        <title>Single origin of Malagasy Carnivora from an African ancestor.</title>
        <authorList>
            <person name="Yoder A.D."/>
            <person name="Burns M.M."/>
            <person name="Zehr S."/>
            <person name="Delefosse T."/>
            <person name="Veron G."/>
            <person name="Goodman S.M."/>
            <person name="Flynn J.J."/>
        </authorList>
    </citation>
    <scope>NUCLEOTIDE SEQUENCE [GENOMIC DNA]</scope>
</reference>
<proteinExistence type="inferred from homology"/>
<geneLocation type="mitochondrion"/>